<protein>
    <recommendedName>
        <fullName evidence="2">Hemagglutinin</fullName>
    </recommendedName>
    <component>
        <recommendedName>
            <fullName evidence="2">Hemagglutinin HA1 chain</fullName>
        </recommendedName>
    </component>
    <component>
        <recommendedName>
            <fullName evidence="2">Hemagglutinin HA2 chain</fullName>
        </recommendedName>
    </component>
</protein>
<feature type="signal peptide" evidence="2">
    <location>
        <begin position="1"/>
        <end position="17"/>
    </location>
</feature>
<feature type="chain" id="PRO_0000440397" description="Hemagglutinin" evidence="2">
    <location>
        <begin position="18"/>
        <end position="566"/>
    </location>
</feature>
<feature type="chain" id="PRO_5000055150" description="Hemagglutinin HA1 chain" evidence="2">
    <location>
        <begin position="18"/>
        <end position="343"/>
    </location>
</feature>
<feature type="chain" id="PRO_5000055151" description="Hemagglutinin HA2 chain" evidence="2">
    <location>
        <begin position="345"/>
        <end position="566"/>
    </location>
</feature>
<feature type="topological domain" description="Extracellular" evidence="2">
    <location>
        <begin position="18"/>
        <end position="529"/>
    </location>
</feature>
<feature type="transmembrane region" description="Helical" evidence="2">
    <location>
        <begin position="530"/>
        <end position="550"/>
    </location>
</feature>
<feature type="topological domain" description="Cytoplasmic" evidence="2">
    <location>
        <begin position="551"/>
        <end position="566"/>
    </location>
</feature>
<feature type="site" description="Cleavage; by host" evidence="2">
    <location>
        <begin position="344"/>
        <end position="345"/>
    </location>
</feature>
<feature type="lipid moiety-binding region" description="S-palmitoyl cysteine; by host" evidence="2">
    <location>
        <position position="555"/>
    </location>
</feature>
<feature type="lipid moiety-binding region" description="S-palmitoyl cysteine; by host" evidence="2">
    <location>
        <position position="562"/>
    </location>
</feature>
<feature type="lipid moiety-binding region" description="S-palmitoyl cysteine; by host" evidence="2">
    <location>
        <position position="565"/>
    </location>
</feature>
<feature type="glycosylation site" description="N-linked (GlcNAc...) asparagine; by host" evidence="2">
    <location>
        <position position="27"/>
    </location>
</feature>
<feature type="glycosylation site" description="N-linked (GlcNAc...) asparagine; by host" evidence="2">
    <location>
        <position position="28"/>
    </location>
</feature>
<feature type="glycosylation site" description="N-linked (GlcNAc...) asparagine; by host" evidence="2">
    <location>
        <position position="40"/>
    </location>
</feature>
<feature type="glycosylation site" description="N-linked (GlcNAc...) asparagine; by host" evidence="2">
    <location>
        <position position="104"/>
    </location>
</feature>
<feature type="glycosylation site" description="N-linked (GlcNAc...) asparagine; by host" evidence="2">
    <location>
        <position position="304"/>
    </location>
</feature>
<feature type="glycosylation site" description="N-linked (GlcNAc...) asparagine; by host" evidence="2">
    <location>
        <position position="498"/>
    </location>
</feature>
<feature type="disulfide bond" description="Interchain (between HA1 and HA2 chains)" evidence="2">
    <location>
        <begin position="21"/>
        <end position="481"/>
    </location>
</feature>
<feature type="disulfide bond" evidence="2">
    <location>
        <begin position="59"/>
        <end position="292"/>
    </location>
</feature>
<feature type="disulfide bond" evidence="2">
    <location>
        <begin position="72"/>
        <end position="84"/>
    </location>
</feature>
<feature type="disulfide bond" evidence="2">
    <location>
        <begin position="107"/>
        <end position="153"/>
    </location>
</feature>
<feature type="disulfide bond" evidence="2">
    <location>
        <begin position="296"/>
        <end position="320"/>
    </location>
</feature>
<feature type="disulfide bond" evidence="2">
    <location>
        <begin position="488"/>
        <end position="492"/>
    </location>
</feature>
<feature type="sequence variant">
    <original>E</original>
    <variation>G</variation>
    <location>
        <position position="172"/>
    </location>
</feature>
<reference key="1">
    <citation type="journal article" date="1998" name="J. Virol.">
        <title>Molecular basis for the generation in pigs of influenza A viruses with pandemic potential.</title>
        <authorList>
            <person name="Ito T."/>
            <person name="Couceiro J.N."/>
            <person name="Kelm S."/>
            <person name="Baum L.G."/>
            <person name="Krauss S."/>
            <person name="Castrucci M.R."/>
            <person name="Donatelli I."/>
            <person name="Kida H."/>
            <person name="Paulson J.C."/>
            <person name="Webster R.G."/>
            <person name="Kawaoka Y."/>
        </authorList>
    </citation>
    <scope>NUCLEOTIDE SEQUENCE [GENOMIC RNA]</scope>
</reference>
<reference key="2">
    <citation type="submission" date="2008-06" db="EMBL/GenBank/DDBJ databases">
        <title>The NIAID influenza genome sequencing project.</title>
        <authorList>
            <person name="Spiro D."/>
            <person name="Halpin R."/>
            <person name="Boyne A."/>
            <person name="Bera J."/>
            <person name="Ghedin E."/>
            <person name="Hostetler J."/>
            <person name="Fedorova N."/>
            <person name="Kim M."/>
            <person name="Zaborsky J."/>
            <person name="Overton L."/>
            <person name="Djuric K."/>
            <person name="Sarmiento M."/>
            <person name="Sitz J."/>
            <person name="Katzel D."/>
            <person name="Webster R.G."/>
            <person name="Hoffmann E."/>
            <person name="Krauss S."/>
            <person name="Naeve C."/>
            <person name="Bolotov P."/>
            <person name="Bao Y."/>
            <person name="Sanders R."/>
            <person name="Dernovoy D."/>
            <person name="Kiryutin B."/>
            <person name="Lipman D.J."/>
            <person name="Tatusova T."/>
        </authorList>
    </citation>
    <scope>NUCLEOTIDE SEQUENCE [GENOMIC RNA]</scope>
</reference>
<reference key="3">
    <citation type="submission" date="2008-06" db="EMBL/GenBank/DDBJ databases">
        <authorList>
            <consortium name="The NIAID Influenza Genome Sequencing Consortium"/>
        </authorList>
    </citation>
    <scope>NUCLEOTIDE SEQUENCE [GENOMIC RNA]</scope>
</reference>
<comment type="function">
    <text evidence="2">Binds to sialic acid-containing receptors on the cell surface, bringing about the attachment of the virus particle to the cell. This attachment induces virion internalization either through clathrin-dependent endocytosis or through clathrin- and caveolin-independent pathway. Plays a major role in the determination of host range restriction and virulence. Class I viral fusion protein. Responsible for penetration of the virus into the cell cytoplasm by mediating the fusion of the membrane of the endocytosed virus particle with the endosomal membrane. Low pH in endosomes induces an irreversible conformational change in HA2, releasing the fusion hydrophobic peptide. Several trimers are required to form a competent fusion pore.</text>
</comment>
<comment type="subunit">
    <text evidence="1">Homotrimer of disulfide-linked HA1-HA2. Interacts with human CACNA1C.</text>
</comment>
<comment type="subcellular location">
    <subcellularLocation>
        <location evidence="2">Virion membrane</location>
        <topology evidence="2">Single-pass type I membrane protein</topology>
    </subcellularLocation>
    <subcellularLocation>
        <location evidence="2">Host apical cell membrane</location>
        <topology evidence="2">Single-pass type I membrane protein</topology>
    </subcellularLocation>
    <text evidence="2">Targeted to the apical plasma membrane in epithelial polarized cells through a signal present in the transmembrane domain. Associated with glycosphingolipid- and cholesterol-enriched detergent-resistant lipid rafts.</text>
</comment>
<comment type="PTM">
    <text evidence="2">Palmitoylated.</text>
</comment>
<comment type="PTM">
    <text evidence="2">In natural infection, inactive HA is matured into HA1 and HA2 outside the cell by one or more trypsin-like, arginine-specific endoprotease secreted by the bronchial epithelial cells. One identified protease that may be involved in this process is secreted in lungs by club cells.</text>
</comment>
<comment type="miscellaneous">
    <text>Major glycoprotein, comprises over 80% of the envelope proteins present in virus particle.</text>
</comment>
<comment type="miscellaneous">
    <text>The extent of infection into host organism is determined by HA. Influenza viruses bud from the apical surface of polarized epithelial cells (e.g. bronchial epithelial cells) into lumen of lungs and are therefore usually pneumotropic. The reason is that HA is cleaved by tryptase clara which is restricted to lungs. However, HAs of H5 and H7 pantropic avian viruses subtypes can be cleaved by furin and subtilisin-type enzymes, allowing the virus to grow in other organs than lungs.</text>
</comment>
<comment type="miscellaneous">
    <text evidence="3">The influenza A genome consist of 8 RNA segments. Genetic variation of hemagglutinin and/or neuraminidase genes results in the emergence of new influenza strains. The mechanism of variation can be the result of point mutations or the result of genetic reassortment between segments of two different strains.</text>
</comment>
<comment type="similarity">
    <text evidence="2">Belongs to the influenza viruses hemagglutinin family.</text>
</comment>
<evidence type="ECO:0000250" key="1">
    <source>
        <dbReference type="UniProtKB" id="Q289M7"/>
    </source>
</evidence>
<evidence type="ECO:0000255" key="2">
    <source>
        <dbReference type="HAMAP-Rule" id="MF_04072"/>
    </source>
</evidence>
<evidence type="ECO:0000305" key="3"/>
<name>HEMA_I61A1</name>
<sequence>MKAILLVLLCAFAATNADTLCIGYHANNSTDTVDTVLEKNVTVTHSVNLLEDRHNGKLCKLGGIAPLHLGKCNIAGWLLGNPECELLLTVSSWSYIVETSNSDNGTCYPGDFINYEELREQLSSVSSFERFEIFPKTSSWPNHETNRGVTAACPYAGANSFYRNLIWLVKKESSYPKLSKSYVNNKGKEVLVLWGIHHPPTSTDQQSLYQNADAYVFVGSSKYNRKFKPEIAARPKVRGQAGRMNYYWTLIEPGDTITFEATGNLVVPRYAFAMNRGSGSGIIISDAPVHDCNTKCQTPKGAINTSLPFQNIHPVTIGECPKYVKSTKLRMATGLRNIPSIQSRGLFGAIAGFIEGGWTGMIDGWYGYHHQNGQGSGYAADQKSTQNAIDGITNKVNSVIEKMNMQFTAVGKEFNNLEKRIENLNKKVDDGFLDVWTYNAELLVLLENERTLDFHDSNVKNLYEKVRSQLRNNAKEIGNGCFEFYHKCDDTCMESVKNGTYDYPKYSEESKLNREEIDGVKLESTRVYQILAIYSTVASSLVLLVSLGAISFWMCSNGSLQCRICI</sequence>
<keyword id="KW-1167">Clathrin- and caveolin-independent endocytosis of virus by host</keyword>
<keyword id="KW-1165">Clathrin-mediated endocytosis of virus by host</keyword>
<keyword id="KW-1015">Disulfide bond</keyword>
<keyword id="KW-1170">Fusion of virus membrane with host endosomal membrane</keyword>
<keyword id="KW-1168">Fusion of virus membrane with host membrane</keyword>
<keyword id="KW-0325">Glycoprotein</keyword>
<keyword id="KW-0348">Hemagglutinin</keyword>
<keyword id="KW-1032">Host cell membrane</keyword>
<keyword id="KW-1043">Host membrane</keyword>
<keyword id="KW-0945">Host-virus interaction</keyword>
<keyword id="KW-0449">Lipoprotein</keyword>
<keyword id="KW-0472">Membrane</keyword>
<keyword id="KW-0564">Palmitate</keyword>
<keyword id="KW-0732">Signal</keyword>
<keyword id="KW-0812">Transmembrane</keyword>
<keyword id="KW-1133">Transmembrane helix</keyword>
<keyword id="KW-1161">Viral attachment to host cell</keyword>
<keyword id="KW-0261">Viral envelope protein</keyword>
<keyword id="KW-1162">Viral penetration into host cytoplasm</keyword>
<keyword id="KW-0946">Virion</keyword>
<keyword id="KW-1164">Virus endocytosis by host</keyword>
<keyword id="KW-1160">Virus entry into host cell</keyword>
<proteinExistence type="evidence at transcript level"/>
<organism>
    <name type="scientific">Influenza A virus (strain A/Swine/Wisconsin/1/1961 H1N1)</name>
    <dbReference type="NCBI Taxonomy" id="383533"/>
    <lineage>
        <taxon>Viruses</taxon>
        <taxon>Riboviria</taxon>
        <taxon>Orthornavirae</taxon>
        <taxon>Negarnaviricota</taxon>
        <taxon>Polyploviricotina</taxon>
        <taxon>Insthoviricetes</taxon>
        <taxon>Articulavirales</taxon>
        <taxon>Orthomyxoviridae</taxon>
        <taxon>Alphainfluenzavirus</taxon>
        <taxon>Alphainfluenzavirus influenzae</taxon>
        <taxon>Influenza A virus</taxon>
    </lineage>
</organism>
<organismHost>
    <name type="scientific">Aves</name>
    <dbReference type="NCBI Taxonomy" id="8782"/>
</organismHost>
<organismHost>
    <name type="scientific">Homo sapiens</name>
    <name type="common">Human</name>
    <dbReference type="NCBI Taxonomy" id="9606"/>
</organismHost>
<organismHost>
    <name type="scientific">Sus scrofa</name>
    <name type="common">Pig</name>
    <dbReference type="NCBI Taxonomy" id="9823"/>
</organismHost>
<dbReference type="EMBL" id="AF091307">
    <property type="protein sequence ID" value="AAD25302.1"/>
    <property type="molecule type" value="mRNA"/>
</dbReference>
<dbReference type="EMBL" id="CY032213">
    <property type="protein sequence ID" value="ACD85154.1"/>
    <property type="molecule type" value="Viral_cRNA"/>
</dbReference>
<dbReference type="SMR" id="Q9WCD8"/>
<dbReference type="GlyCosmos" id="Q9WCD8">
    <property type="glycosylation" value="6 sites, No reported glycans"/>
</dbReference>
<dbReference type="PRO" id="PR:Q9WCD8"/>
<dbReference type="Proteomes" id="UP000007769">
    <property type="component" value="Genome"/>
</dbReference>
<dbReference type="GO" id="GO:0020002">
    <property type="term" value="C:host cell plasma membrane"/>
    <property type="evidence" value="ECO:0007669"/>
    <property type="project" value="UniProtKB-SubCell"/>
</dbReference>
<dbReference type="GO" id="GO:0016020">
    <property type="term" value="C:membrane"/>
    <property type="evidence" value="ECO:0007669"/>
    <property type="project" value="UniProtKB-UniRule"/>
</dbReference>
<dbReference type="GO" id="GO:0019031">
    <property type="term" value="C:viral envelope"/>
    <property type="evidence" value="ECO:0007669"/>
    <property type="project" value="UniProtKB-UniRule"/>
</dbReference>
<dbReference type="GO" id="GO:0055036">
    <property type="term" value="C:virion membrane"/>
    <property type="evidence" value="ECO:0007669"/>
    <property type="project" value="UniProtKB-SubCell"/>
</dbReference>
<dbReference type="GO" id="GO:0046789">
    <property type="term" value="F:host cell surface receptor binding"/>
    <property type="evidence" value="ECO:0007669"/>
    <property type="project" value="UniProtKB-UniRule"/>
</dbReference>
<dbReference type="GO" id="GO:0075512">
    <property type="term" value="P:clathrin-dependent endocytosis of virus by host cell"/>
    <property type="evidence" value="ECO:0007669"/>
    <property type="project" value="UniProtKB-UniRule"/>
</dbReference>
<dbReference type="GO" id="GO:0039654">
    <property type="term" value="P:fusion of virus membrane with host endosome membrane"/>
    <property type="evidence" value="ECO:0007669"/>
    <property type="project" value="UniProtKB-UniRule"/>
</dbReference>
<dbReference type="GO" id="GO:0019064">
    <property type="term" value="P:fusion of virus membrane with host plasma membrane"/>
    <property type="evidence" value="ECO:0007669"/>
    <property type="project" value="InterPro"/>
</dbReference>
<dbReference type="GO" id="GO:0046761">
    <property type="term" value="P:viral budding from plasma membrane"/>
    <property type="evidence" value="ECO:0007669"/>
    <property type="project" value="UniProtKB-UniRule"/>
</dbReference>
<dbReference type="GO" id="GO:0019062">
    <property type="term" value="P:virion attachment to host cell"/>
    <property type="evidence" value="ECO:0007669"/>
    <property type="project" value="UniProtKB-KW"/>
</dbReference>
<dbReference type="FunFam" id="3.90.20.10:FF:000002">
    <property type="entry name" value="Hemagglutinin"/>
    <property type="match status" value="1"/>
</dbReference>
<dbReference type="Gene3D" id="3.90.20.10">
    <property type="match status" value="1"/>
</dbReference>
<dbReference type="Gene3D" id="3.90.209.20">
    <property type="match status" value="1"/>
</dbReference>
<dbReference type="Gene3D" id="2.10.77.10">
    <property type="entry name" value="Hemagglutinin Chain A, Domain 2"/>
    <property type="match status" value="1"/>
</dbReference>
<dbReference type="HAMAP" id="MF_04072">
    <property type="entry name" value="INFV_HEMA"/>
    <property type="match status" value="1"/>
</dbReference>
<dbReference type="InterPro" id="IPR008980">
    <property type="entry name" value="Capsid_hemagglutn"/>
</dbReference>
<dbReference type="InterPro" id="IPR013828">
    <property type="entry name" value="Hemagglutn_HA1_a/b_dom_sf"/>
</dbReference>
<dbReference type="InterPro" id="IPR000149">
    <property type="entry name" value="Hemagglutn_influenz_A"/>
</dbReference>
<dbReference type="InterPro" id="IPR001364">
    <property type="entry name" value="Hemagglutn_influenz_A/B"/>
</dbReference>
<dbReference type="Pfam" id="PF00509">
    <property type="entry name" value="Hemagglutinin"/>
    <property type="match status" value="1"/>
</dbReference>
<dbReference type="PRINTS" id="PR00330">
    <property type="entry name" value="HEMAGGLUTN1"/>
</dbReference>
<dbReference type="PRINTS" id="PR00329">
    <property type="entry name" value="HEMAGGLUTN12"/>
</dbReference>
<dbReference type="SUPFAM" id="SSF58064">
    <property type="entry name" value="Influenza hemagglutinin (stalk)"/>
    <property type="match status" value="1"/>
</dbReference>
<dbReference type="SUPFAM" id="SSF49818">
    <property type="entry name" value="Viral protein domain"/>
    <property type="match status" value="1"/>
</dbReference>
<accession>Q9WCD8</accession>
<accession>B3EUQ6</accession>
<gene>
    <name evidence="2" type="primary">HA</name>
</gene>